<evidence type="ECO:0000305" key="1"/>
<sequence length="554" mass="60220">MLLRSPSYAGKAAQAQEGDAYGVYQLATLLIGMDAEDETSCLLAADALYRLGRLDDAHKSLLVALSQRPQAAPVLVRLALLQLRRGFCYDANQLVKKVAQSGDTACLQHMLDIFHHEDLQLLQDHCHTRALSILRARPGGSDSEAHTREAIAYLSLAIFAAGSGGSESLLVRARCYGLLGQKKTAMFDFNAILREEPGNVKALCGRALVHLALDQLQEAVDDMVSALKLDPGTVIPEILSLKTEVQLPLTQGLYTRCRVLLNQCLHTGVPLREEDTQGLLAMGKALIRINATQPSWRLLLTDILTGLGKYQEAGTHLQEALHLTPSSEAAQARQGLLQLKKGDVSAAVHGLQCLAERDTQDLGFLLCLLDSPERQSLVQTAAKEASNILDLGNPGQALSYCSLAILAGGNNPYHLRLRVACLTQLQEYDRALRDLDRVLQHPAEDSDLPRQSEDFCTRGRLLLSLGDKDGAAGAFTQALALAPAQAQNSLLEQPGQAMTASVFLIHGQRCLEEEHFEEAWTAVQNGLLVDPSHSGLKKLKLRTRKVATSGCRLH</sequence>
<protein>
    <recommendedName>
        <fullName>Tetratricopeptide repeat protein 34</fullName>
        <shortName>TPR repeat protein 34</shortName>
    </recommendedName>
</protein>
<keyword id="KW-1185">Reference proteome</keyword>
<keyword id="KW-0677">Repeat</keyword>
<keyword id="KW-0802">TPR repeat</keyword>
<name>TTC34_MOUSE</name>
<feature type="chain" id="PRO_0000341279" description="Tetratricopeptide repeat protein 34">
    <location>
        <begin position="1"/>
        <end position="554"/>
    </location>
</feature>
<feature type="repeat" description="TPR 1">
    <location>
        <begin position="38"/>
        <end position="71"/>
    </location>
</feature>
<feature type="repeat" description="TPR 2">
    <location>
        <begin position="166"/>
        <end position="199"/>
    </location>
</feature>
<feature type="repeat" description="TPR 3">
    <location>
        <begin position="200"/>
        <end position="233"/>
    </location>
</feature>
<feature type="repeat" description="TPR 4">
    <location>
        <begin position="294"/>
        <end position="327"/>
    </location>
</feature>
<feature type="repeat" description="TPR 5">
    <location>
        <begin position="328"/>
        <end position="361"/>
    </location>
</feature>
<feature type="repeat" description="TPR 6">
    <location>
        <begin position="411"/>
        <end position="445"/>
    </location>
</feature>
<feature type="repeat" description="TPR 7">
    <location>
        <begin position="452"/>
        <end position="485"/>
    </location>
</feature>
<feature type="repeat" description="TPR 8">
    <location>
        <begin position="500"/>
        <end position="533"/>
    </location>
</feature>
<feature type="sequence conflict" description="In Ref. 3; AAH68299." evidence="1" ref="3">
    <original>I</original>
    <variation>T</variation>
    <location>
        <position position="235"/>
    </location>
</feature>
<feature type="sequence conflict" description="In Ref. 3; AAH68299." evidence="1" ref="3">
    <original>M</original>
    <variation>T</variation>
    <location>
        <position position="282"/>
    </location>
</feature>
<feature type="sequence conflict" description="In Ref. 3; AAH68299." evidence="1" ref="3">
    <original>V</original>
    <variation>A</variation>
    <location>
        <position position="348"/>
    </location>
</feature>
<feature type="sequence conflict" description="In Ref. 1; BAC26761." evidence="1" ref="1">
    <original>A</original>
    <variation>V</variation>
    <location>
        <position position="355"/>
    </location>
</feature>
<feature type="sequence conflict" description="In Ref. 3; AAH68299." evidence="1" ref="3">
    <original>C</original>
    <variation>R</variation>
    <location>
        <position position="367"/>
    </location>
</feature>
<feature type="sequence conflict" description="In Ref. 3; AAH68299." evidence="1" ref="3">
    <original>Q</original>
    <variation>R</variation>
    <location>
        <position position="426"/>
    </location>
</feature>
<feature type="sequence conflict" description="In Ref. 3; AAH68299." evidence="1" ref="3">
    <original>Q</original>
    <variation>R</variation>
    <location>
        <position position="451"/>
    </location>
</feature>
<feature type="sequence conflict" description="In Ref. 3; AAH68299." evidence="1" ref="3">
    <original>E</original>
    <variation>Q</variation>
    <location>
        <position position="514"/>
    </location>
</feature>
<reference key="1">
    <citation type="journal article" date="2005" name="Science">
        <title>The transcriptional landscape of the mammalian genome.</title>
        <authorList>
            <person name="Carninci P."/>
            <person name="Kasukawa T."/>
            <person name="Katayama S."/>
            <person name="Gough J."/>
            <person name="Frith M.C."/>
            <person name="Maeda N."/>
            <person name="Oyama R."/>
            <person name="Ravasi T."/>
            <person name="Lenhard B."/>
            <person name="Wells C."/>
            <person name="Kodzius R."/>
            <person name="Shimokawa K."/>
            <person name="Bajic V.B."/>
            <person name="Brenner S.E."/>
            <person name="Batalov S."/>
            <person name="Forrest A.R."/>
            <person name="Zavolan M."/>
            <person name="Davis M.J."/>
            <person name="Wilming L.G."/>
            <person name="Aidinis V."/>
            <person name="Allen J.E."/>
            <person name="Ambesi-Impiombato A."/>
            <person name="Apweiler R."/>
            <person name="Aturaliya R.N."/>
            <person name="Bailey T.L."/>
            <person name="Bansal M."/>
            <person name="Baxter L."/>
            <person name="Beisel K.W."/>
            <person name="Bersano T."/>
            <person name="Bono H."/>
            <person name="Chalk A.M."/>
            <person name="Chiu K.P."/>
            <person name="Choudhary V."/>
            <person name="Christoffels A."/>
            <person name="Clutterbuck D.R."/>
            <person name="Crowe M.L."/>
            <person name="Dalla E."/>
            <person name="Dalrymple B.P."/>
            <person name="de Bono B."/>
            <person name="Della Gatta G."/>
            <person name="di Bernardo D."/>
            <person name="Down T."/>
            <person name="Engstrom P."/>
            <person name="Fagiolini M."/>
            <person name="Faulkner G."/>
            <person name="Fletcher C.F."/>
            <person name="Fukushima T."/>
            <person name="Furuno M."/>
            <person name="Futaki S."/>
            <person name="Gariboldi M."/>
            <person name="Georgii-Hemming P."/>
            <person name="Gingeras T.R."/>
            <person name="Gojobori T."/>
            <person name="Green R.E."/>
            <person name="Gustincich S."/>
            <person name="Harbers M."/>
            <person name="Hayashi Y."/>
            <person name="Hensch T.K."/>
            <person name="Hirokawa N."/>
            <person name="Hill D."/>
            <person name="Huminiecki L."/>
            <person name="Iacono M."/>
            <person name="Ikeo K."/>
            <person name="Iwama A."/>
            <person name="Ishikawa T."/>
            <person name="Jakt M."/>
            <person name="Kanapin A."/>
            <person name="Katoh M."/>
            <person name="Kawasawa Y."/>
            <person name="Kelso J."/>
            <person name="Kitamura H."/>
            <person name="Kitano H."/>
            <person name="Kollias G."/>
            <person name="Krishnan S.P."/>
            <person name="Kruger A."/>
            <person name="Kummerfeld S.K."/>
            <person name="Kurochkin I.V."/>
            <person name="Lareau L.F."/>
            <person name="Lazarevic D."/>
            <person name="Lipovich L."/>
            <person name="Liu J."/>
            <person name="Liuni S."/>
            <person name="McWilliam S."/>
            <person name="Madan Babu M."/>
            <person name="Madera M."/>
            <person name="Marchionni L."/>
            <person name="Matsuda H."/>
            <person name="Matsuzawa S."/>
            <person name="Miki H."/>
            <person name="Mignone F."/>
            <person name="Miyake S."/>
            <person name="Morris K."/>
            <person name="Mottagui-Tabar S."/>
            <person name="Mulder N."/>
            <person name="Nakano N."/>
            <person name="Nakauchi H."/>
            <person name="Ng P."/>
            <person name="Nilsson R."/>
            <person name="Nishiguchi S."/>
            <person name="Nishikawa S."/>
            <person name="Nori F."/>
            <person name="Ohara O."/>
            <person name="Okazaki Y."/>
            <person name="Orlando V."/>
            <person name="Pang K.C."/>
            <person name="Pavan W.J."/>
            <person name="Pavesi G."/>
            <person name="Pesole G."/>
            <person name="Petrovsky N."/>
            <person name="Piazza S."/>
            <person name="Reed J."/>
            <person name="Reid J.F."/>
            <person name="Ring B.Z."/>
            <person name="Ringwald M."/>
            <person name="Rost B."/>
            <person name="Ruan Y."/>
            <person name="Salzberg S.L."/>
            <person name="Sandelin A."/>
            <person name="Schneider C."/>
            <person name="Schoenbach C."/>
            <person name="Sekiguchi K."/>
            <person name="Semple C.A."/>
            <person name="Seno S."/>
            <person name="Sessa L."/>
            <person name="Sheng Y."/>
            <person name="Shibata Y."/>
            <person name="Shimada H."/>
            <person name="Shimada K."/>
            <person name="Silva D."/>
            <person name="Sinclair B."/>
            <person name="Sperling S."/>
            <person name="Stupka E."/>
            <person name="Sugiura K."/>
            <person name="Sultana R."/>
            <person name="Takenaka Y."/>
            <person name="Taki K."/>
            <person name="Tammoja K."/>
            <person name="Tan S.L."/>
            <person name="Tang S."/>
            <person name="Taylor M.S."/>
            <person name="Tegner J."/>
            <person name="Teichmann S.A."/>
            <person name="Ueda H.R."/>
            <person name="van Nimwegen E."/>
            <person name="Verardo R."/>
            <person name="Wei C.L."/>
            <person name="Yagi K."/>
            <person name="Yamanishi H."/>
            <person name="Zabarovsky E."/>
            <person name="Zhu S."/>
            <person name="Zimmer A."/>
            <person name="Hide W."/>
            <person name="Bult C."/>
            <person name="Grimmond S.M."/>
            <person name="Teasdale R.D."/>
            <person name="Liu E.T."/>
            <person name="Brusic V."/>
            <person name="Quackenbush J."/>
            <person name="Wahlestedt C."/>
            <person name="Mattick J.S."/>
            <person name="Hume D.A."/>
            <person name="Kai C."/>
            <person name="Sasaki D."/>
            <person name="Tomaru Y."/>
            <person name="Fukuda S."/>
            <person name="Kanamori-Katayama M."/>
            <person name="Suzuki M."/>
            <person name="Aoki J."/>
            <person name="Arakawa T."/>
            <person name="Iida J."/>
            <person name="Imamura K."/>
            <person name="Itoh M."/>
            <person name="Kato T."/>
            <person name="Kawaji H."/>
            <person name="Kawagashira N."/>
            <person name="Kawashima T."/>
            <person name="Kojima M."/>
            <person name="Kondo S."/>
            <person name="Konno H."/>
            <person name="Nakano K."/>
            <person name="Ninomiya N."/>
            <person name="Nishio T."/>
            <person name="Okada M."/>
            <person name="Plessy C."/>
            <person name="Shibata K."/>
            <person name="Shiraki T."/>
            <person name="Suzuki S."/>
            <person name="Tagami M."/>
            <person name="Waki K."/>
            <person name="Watahiki A."/>
            <person name="Okamura-Oho Y."/>
            <person name="Suzuki H."/>
            <person name="Kawai J."/>
            <person name="Hayashizaki Y."/>
        </authorList>
    </citation>
    <scope>NUCLEOTIDE SEQUENCE [LARGE SCALE MRNA]</scope>
    <source>
        <strain>C57BL/6J</strain>
        <tissue>Testis</tissue>
    </source>
</reference>
<reference key="2">
    <citation type="journal article" date="2009" name="PLoS Biol.">
        <title>Lineage-specific biology revealed by a finished genome assembly of the mouse.</title>
        <authorList>
            <person name="Church D.M."/>
            <person name="Goodstadt L."/>
            <person name="Hillier L.W."/>
            <person name="Zody M.C."/>
            <person name="Goldstein S."/>
            <person name="She X."/>
            <person name="Bult C.J."/>
            <person name="Agarwala R."/>
            <person name="Cherry J.L."/>
            <person name="DiCuccio M."/>
            <person name="Hlavina W."/>
            <person name="Kapustin Y."/>
            <person name="Meric P."/>
            <person name="Maglott D."/>
            <person name="Birtle Z."/>
            <person name="Marques A.C."/>
            <person name="Graves T."/>
            <person name="Zhou S."/>
            <person name="Teague B."/>
            <person name="Potamousis K."/>
            <person name="Churas C."/>
            <person name="Place M."/>
            <person name="Herschleb J."/>
            <person name="Runnheim R."/>
            <person name="Forrest D."/>
            <person name="Amos-Landgraf J."/>
            <person name="Schwartz D.C."/>
            <person name="Cheng Z."/>
            <person name="Lindblad-Toh K."/>
            <person name="Eichler E.E."/>
            <person name="Ponting C.P."/>
        </authorList>
    </citation>
    <scope>NUCLEOTIDE SEQUENCE [LARGE SCALE GENOMIC DNA]</scope>
    <source>
        <strain>C57BL/6J</strain>
    </source>
</reference>
<reference key="3">
    <citation type="journal article" date="2004" name="Genome Res.">
        <title>The status, quality, and expansion of the NIH full-length cDNA project: the Mammalian Gene Collection (MGC).</title>
        <authorList>
            <consortium name="The MGC Project Team"/>
        </authorList>
    </citation>
    <scope>NUCLEOTIDE SEQUENCE [LARGE SCALE MRNA]</scope>
    <source>
        <strain>CD-1</strain>
        <tissue>Neural stem cell</tissue>
    </source>
</reference>
<accession>Q8C0Q3</accession>
<accession>B1AS13</accession>
<accession>Q6NV67</accession>
<organism>
    <name type="scientific">Mus musculus</name>
    <name type="common">Mouse</name>
    <dbReference type="NCBI Taxonomy" id="10090"/>
    <lineage>
        <taxon>Eukaryota</taxon>
        <taxon>Metazoa</taxon>
        <taxon>Chordata</taxon>
        <taxon>Craniata</taxon>
        <taxon>Vertebrata</taxon>
        <taxon>Euteleostomi</taxon>
        <taxon>Mammalia</taxon>
        <taxon>Eutheria</taxon>
        <taxon>Euarchontoglires</taxon>
        <taxon>Glires</taxon>
        <taxon>Rodentia</taxon>
        <taxon>Myomorpha</taxon>
        <taxon>Muroidea</taxon>
        <taxon>Muridae</taxon>
        <taxon>Murinae</taxon>
        <taxon>Mus</taxon>
        <taxon>Mus</taxon>
    </lineage>
</organism>
<proteinExistence type="evidence at transcript level"/>
<dbReference type="EMBL" id="AK030055">
    <property type="protein sequence ID" value="BAC26761.1"/>
    <property type="molecule type" value="mRNA"/>
</dbReference>
<dbReference type="EMBL" id="AL607032">
    <property type="status" value="NOT_ANNOTATED_CDS"/>
    <property type="molecule type" value="Genomic_DNA"/>
</dbReference>
<dbReference type="EMBL" id="BC068299">
    <property type="protein sequence ID" value="AAH68299.1"/>
    <property type="molecule type" value="mRNA"/>
</dbReference>
<dbReference type="RefSeq" id="NP_766466.3">
    <property type="nucleotide sequence ID" value="NM_172878.3"/>
</dbReference>
<dbReference type="SMR" id="Q8C0Q3"/>
<dbReference type="BioGRID" id="232460">
    <property type="interactions" value="1"/>
</dbReference>
<dbReference type="STRING" id="10090.ENSMUSP00000051782"/>
<dbReference type="GlyGen" id="Q8C0Q3">
    <property type="glycosylation" value="1 site, 1 O-linked glycan (1 site)"/>
</dbReference>
<dbReference type="iPTMnet" id="Q8C0Q3"/>
<dbReference type="PhosphoSitePlus" id="Q8C0Q3"/>
<dbReference type="PaxDb" id="10090-ENSMUSP00000051782"/>
<dbReference type="ProteomicsDB" id="297675"/>
<dbReference type="Antibodypedia" id="67410">
    <property type="antibodies" value="65 antibodies from 13 providers"/>
</dbReference>
<dbReference type="Ensembl" id="ENSMUST00000050220.4">
    <property type="protein sequence ID" value="ENSMUSP00000051782.3"/>
    <property type="gene ID" value="ENSMUSG00000046637.4"/>
</dbReference>
<dbReference type="GeneID" id="242800"/>
<dbReference type="KEGG" id="mmu:242800"/>
<dbReference type="UCSC" id="uc012dql.1">
    <property type="organism name" value="mouse"/>
</dbReference>
<dbReference type="AGR" id="MGI:2445205"/>
<dbReference type="CTD" id="100287898"/>
<dbReference type="MGI" id="MGI:2445205">
    <property type="gene designation" value="Ttc34"/>
</dbReference>
<dbReference type="VEuPathDB" id="HostDB:ENSMUSG00000046637"/>
<dbReference type="eggNOG" id="ENOG502QRDY">
    <property type="taxonomic scope" value="Eukaryota"/>
</dbReference>
<dbReference type="GeneTree" id="ENSGT00390000003047"/>
<dbReference type="HOGENOM" id="CLU_030342_0_0_1"/>
<dbReference type="InParanoid" id="Q8C0Q3"/>
<dbReference type="OMA" id="HWDGMAV"/>
<dbReference type="PhylomeDB" id="Q8C0Q3"/>
<dbReference type="TreeFam" id="TF332803"/>
<dbReference type="BioGRID-ORCS" id="242800">
    <property type="hits" value="3 hits in 76 CRISPR screens"/>
</dbReference>
<dbReference type="PRO" id="PR:Q8C0Q3"/>
<dbReference type="Proteomes" id="UP000000589">
    <property type="component" value="Chromosome 4"/>
</dbReference>
<dbReference type="RNAct" id="Q8C0Q3">
    <property type="molecule type" value="protein"/>
</dbReference>
<dbReference type="Bgee" id="ENSMUSG00000046637">
    <property type="expression patterns" value="Expressed in animal zygote and 41 other cell types or tissues"/>
</dbReference>
<dbReference type="ExpressionAtlas" id="Q8C0Q3">
    <property type="expression patterns" value="baseline and differential"/>
</dbReference>
<dbReference type="Gene3D" id="1.25.40.10">
    <property type="entry name" value="Tetratricopeptide repeat domain"/>
    <property type="match status" value="2"/>
</dbReference>
<dbReference type="InterPro" id="IPR011990">
    <property type="entry name" value="TPR-like_helical_dom_sf"/>
</dbReference>
<dbReference type="InterPro" id="IPR019734">
    <property type="entry name" value="TPR_rpt"/>
</dbReference>
<dbReference type="InterPro" id="IPR042161">
    <property type="entry name" value="TTC34"/>
</dbReference>
<dbReference type="PANTHER" id="PTHR44874">
    <property type="entry name" value="TETRATRICOPEPTIDE REPEAT PROTEIN 34"/>
    <property type="match status" value="1"/>
</dbReference>
<dbReference type="PANTHER" id="PTHR44874:SF1">
    <property type="entry name" value="TETRATRICOPEPTIDE REPEAT PROTEIN 34"/>
    <property type="match status" value="1"/>
</dbReference>
<dbReference type="SMART" id="SM00028">
    <property type="entry name" value="TPR"/>
    <property type="match status" value="5"/>
</dbReference>
<dbReference type="SUPFAM" id="SSF48452">
    <property type="entry name" value="TPR-like"/>
    <property type="match status" value="3"/>
</dbReference>
<dbReference type="PROSITE" id="PS50005">
    <property type="entry name" value="TPR"/>
    <property type="match status" value="5"/>
</dbReference>
<dbReference type="PROSITE" id="PS50293">
    <property type="entry name" value="TPR_REGION"/>
    <property type="match status" value="2"/>
</dbReference>
<gene>
    <name type="primary">Ttc34</name>
</gene>